<sequence length="277" mass="30959">MAIRLYRAYTPGTRNRSVLGFEELVRIKPRKKLTSGQHSGKGRNNRGIITSRHRGGGHKRLYRRMDFRRNKIDVPGRIDSIEYDPNRNTYICLVNYEDGEKRYILHPRGIKIGDMIVSGSEAPISRGNALPLSKMPLGTTIHNVEITPGKGGQLARAAGAVAKLIAKEGRLATLRSPSGEVRLISQDCLATVGQIGNADINNKNFGKAGSKRWLGKRPKVRGVVMNPVDHPHGGGEGRAPIGREKPLTPWGYTAFGRRSRKIRKYSNIFILRRRRRN</sequence>
<evidence type="ECO:0000250" key="1"/>
<evidence type="ECO:0000255" key="2">
    <source>
        <dbReference type="HAMAP-Rule" id="MF_01320"/>
    </source>
</evidence>
<evidence type="ECO:0000256" key="3">
    <source>
        <dbReference type="SAM" id="MobiDB-lite"/>
    </source>
</evidence>
<evidence type="ECO:0000305" key="4"/>
<feature type="chain" id="PRO_0000310063" description="Large ribosomal subunit protein uL2c">
    <location>
        <begin position="1"/>
        <end position="277"/>
    </location>
</feature>
<feature type="region of interest" description="Disordered" evidence="3">
    <location>
        <begin position="30"/>
        <end position="60"/>
    </location>
</feature>
<feature type="compositionally biased region" description="Basic residues" evidence="3">
    <location>
        <begin position="51"/>
        <end position="60"/>
    </location>
</feature>
<name>RK2_ANGEV</name>
<comment type="subunit">
    <text evidence="1">Part of the 50S ribosomal subunit.</text>
</comment>
<comment type="subcellular location">
    <subcellularLocation>
        <location>Plastid</location>
        <location>Chloroplast</location>
    </subcellularLocation>
</comment>
<comment type="similarity">
    <text evidence="4">Belongs to the universal ribosomal protein uL2 family.</text>
</comment>
<proteinExistence type="inferred from homology"/>
<dbReference type="EMBL" id="DQ821119">
    <property type="protein sequence ID" value="ABG79642.1"/>
    <property type="molecule type" value="Genomic_DNA"/>
</dbReference>
<dbReference type="RefSeq" id="YP_001023743.1">
    <property type="nucleotide sequence ID" value="NC_008829.1"/>
</dbReference>
<dbReference type="SMR" id="A2T375"/>
<dbReference type="GeneID" id="4788226"/>
<dbReference type="GO" id="GO:0009507">
    <property type="term" value="C:chloroplast"/>
    <property type="evidence" value="ECO:0007669"/>
    <property type="project" value="UniProtKB-SubCell"/>
</dbReference>
<dbReference type="GO" id="GO:0005762">
    <property type="term" value="C:mitochondrial large ribosomal subunit"/>
    <property type="evidence" value="ECO:0007669"/>
    <property type="project" value="TreeGrafter"/>
</dbReference>
<dbReference type="GO" id="GO:0019843">
    <property type="term" value="F:rRNA binding"/>
    <property type="evidence" value="ECO:0007669"/>
    <property type="project" value="UniProtKB-UniRule"/>
</dbReference>
<dbReference type="GO" id="GO:0003735">
    <property type="term" value="F:structural constituent of ribosome"/>
    <property type="evidence" value="ECO:0007669"/>
    <property type="project" value="InterPro"/>
</dbReference>
<dbReference type="GO" id="GO:0016740">
    <property type="term" value="F:transferase activity"/>
    <property type="evidence" value="ECO:0007669"/>
    <property type="project" value="InterPro"/>
</dbReference>
<dbReference type="GO" id="GO:0032543">
    <property type="term" value="P:mitochondrial translation"/>
    <property type="evidence" value="ECO:0007669"/>
    <property type="project" value="TreeGrafter"/>
</dbReference>
<dbReference type="FunFam" id="2.40.50.140:FF:000003">
    <property type="entry name" value="50S ribosomal protein L2"/>
    <property type="match status" value="1"/>
</dbReference>
<dbReference type="FunFam" id="4.10.950.10:FF:000001">
    <property type="entry name" value="50S ribosomal protein L2"/>
    <property type="match status" value="1"/>
</dbReference>
<dbReference type="FunFam" id="2.30.30.30:FF:000008">
    <property type="entry name" value="50S ribosomal protein L2, chloroplastic"/>
    <property type="match status" value="1"/>
</dbReference>
<dbReference type="Gene3D" id="2.30.30.30">
    <property type="match status" value="1"/>
</dbReference>
<dbReference type="Gene3D" id="2.40.50.140">
    <property type="entry name" value="Nucleic acid-binding proteins"/>
    <property type="match status" value="1"/>
</dbReference>
<dbReference type="Gene3D" id="4.10.950.10">
    <property type="entry name" value="Ribosomal protein L2, domain 3"/>
    <property type="match status" value="1"/>
</dbReference>
<dbReference type="HAMAP" id="MF_01320_B">
    <property type="entry name" value="Ribosomal_uL2_B"/>
    <property type="match status" value="1"/>
</dbReference>
<dbReference type="InterPro" id="IPR012340">
    <property type="entry name" value="NA-bd_OB-fold"/>
</dbReference>
<dbReference type="InterPro" id="IPR014722">
    <property type="entry name" value="Rib_uL2_dom2"/>
</dbReference>
<dbReference type="InterPro" id="IPR002171">
    <property type="entry name" value="Ribosomal_uL2"/>
</dbReference>
<dbReference type="InterPro" id="IPR005880">
    <property type="entry name" value="Ribosomal_uL2_bac/org-type"/>
</dbReference>
<dbReference type="InterPro" id="IPR022669">
    <property type="entry name" value="Ribosomal_uL2_C"/>
</dbReference>
<dbReference type="InterPro" id="IPR022671">
    <property type="entry name" value="Ribosomal_uL2_CS"/>
</dbReference>
<dbReference type="InterPro" id="IPR014726">
    <property type="entry name" value="Ribosomal_uL2_dom3"/>
</dbReference>
<dbReference type="InterPro" id="IPR022666">
    <property type="entry name" value="Ribosomal_uL2_RNA-bd_dom"/>
</dbReference>
<dbReference type="InterPro" id="IPR008991">
    <property type="entry name" value="Translation_prot_SH3-like_sf"/>
</dbReference>
<dbReference type="NCBIfam" id="TIGR01171">
    <property type="entry name" value="rplB_bact"/>
    <property type="match status" value="1"/>
</dbReference>
<dbReference type="PANTHER" id="PTHR13691:SF5">
    <property type="entry name" value="LARGE RIBOSOMAL SUBUNIT PROTEIN UL2M"/>
    <property type="match status" value="1"/>
</dbReference>
<dbReference type="PANTHER" id="PTHR13691">
    <property type="entry name" value="RIBOSOMAL PROTEIN L2"/>
    <property type="match status" value="1"/>
</dbReference>
<dbReference type="Pfam" id="PF00181">
    <property type="entry name" value="Ribosomal_L2"/>
    <property type="match status" value="1"/>
</dbReference>
<dbReference type="Pfam" id="PF03947">
    <property type="entry name" value="Ribosomal_L2_C"/>
    <property type="match status" value="1"/>
</dbReference>
<dbReference type="PIRSF" id="PIRSF002158">
    <property type="entry name" value="Ribosomal_L2"/>
    <property type="match status" value="1"/>
</dbReference>
<dbReference type="SMART" id="SM01383">
    <property type="entry name" value="Ribosomal_L2"/>
    <property type="match status" value="1"/>
</dbReference>
<dbReference type="SMART" id="SM01382">
    <property type="entry name" value="Ribosomal_L2_C"/>
    <property type="match status" value="1"/>
</dbReference>
<dbReference type="SUPFAM" id="SSF50249">
    <property type="entry name" value="Nucleic acid-binding proteins"/>
    <property type="match status" value="1"/>
</dbReference>
<dbReference type="SUPFAM" id="SSF50104">
    <property type="entry name" value="Translation proteins SH3-like domain"/>
    <property type="match status" value="1"/>
</dbReference>
<dbReference type="PROSITE" id="PS00467">
    <property type="entry name" value="RIBOSOMAL_L2"/>
    <property type="match status" value="1"/>
</dbReference>
<keyword id="KW-0150">Chloroplast</keyword>
<keyword id="KW-0934">Plastid</keyword>
<keyword id="KW-0687">Ribonucleoprotein</keyword>
<keyword id="KW-0689">Ribosomal protein</keyword>
<gene>
    <name type="primary">rpl2</name>
</gene>
<organism>
    <name type="scientific">Angiopteris evecta</name>
    <name type="common">Mule's foot fern</name>
    <name type="synonym">Polypodium evectum</name>
    <dbReference type="NCBI Taxonomy" id="13825"/>
    <lineage>
        <taxon>Eukaryota</taxon>
        <taxon>Viridiplantae</taxon>
        <taxon>Streptophyta</taxon>
        <taxon>Embryophyta</taxon>
        <taxon>Tracheophyta</taxon>
        <taxon>Polypodiopsida</taxon>
        <taxon>Marattiidae</taxon>
        <taxon>Marattiales</taxon>
        <taxon>Marattiaceae</taxon>
        <taxon>Angiopteris</taxon>
    </lineage>
</organism>
<accession>A2T375</accession>
<reference key="1">
    <citation type="journal article" date="2007" name="Am. Fern J.">
        <title>The complete plastid genome sequence of Angiopteris evecta (G. Forst.) Hoffm. (Marattiaceae).</title>
        <authorList>
            <person name="Roper J.M."/>
            <person name="Hansen S.K."/>
            <person name="Wolf P.G."/>
            <person name="Karol K.G."/>
            <person name="Mandoli D.F."/>
            <person name="Everett K.D.E."/>
            <person name="Kuehl J.V."/>
            <person name="Boore J.L."/>
        </authorList>
    </citation>
    <scope>NUCLEOTIDE SEQUENCE [LARGE SCALE GENOMIC DNA]</scope>
</reference>
<protein>
    <recommendedName>
        <fullName evidence="2">Large ribosomal subunit protein uL2c</fullName>
    </recommendedName>
    <alternativeName>
        <fullName evidence="4">50S ribosomal protein L2, chloroplastic</fullName>
    </alternativeName>
</protein>
<geneLocation type="chloroplast"/>